<gene>
    <name evidence="1" type="primary">rimP</name>
    <name type="ordered locus">PTH_1265</name>
</gene>
<name>RIMP_PELTS</name>
<feature type="chain" id="PRO_0000384729" description="Ribosome maturation factor RimP">
    <location>
        <begin position="1"/>
        <end position="153"/>
    </location>
</feature>
<reference key="1">
    <citation type="journal article" date="2008" name="Genome Res.">
        <title>The genome of Pelotomaculum thermopropionicum reveals niche-associated evolution in anaerobic microbiota.</title>
        <authorList>
            <person name="Kosaka T."/>
            <person name="Kato S."/>
            <person name="Shimoyama T."/>
            <person name="Ishii S."/>
            <person name="Abe T."/>
            <person name="Watanabe K."/>
        </authorList>
    </citation>
    <scope>NUCLEOTIDE SEQUENCE [LARGE SCALE GENOMIC DNA]</scope>
    <source>
        <strain>DSM 13744 / JCM 10971 / SI</strain>
    </source>
</reference>
<comment type="function">
    <text evidence="1">Required for maturation of 30S ribosomal subunits.</text>
</comment>
<comment type="subcellular location">
    <subcellularLocation>
        <location evidence="1">Cytoplasm</location>
    </subcellularLocation>
</comment>
<comment type="similarity">
    <text evidence="1">Belongs to the RimP family.</text>
</comment>
<dbReference type="EMBL" id="AP009389">
    <property type="protein sequence ID" value="BAF59446.1"/>
    <property type="molecule type" value="Genomic_DNA"/>
</dbReference>
<dbReference type="SMR" id="A5D2U8"/>
<dbReference type="STRING" id="370438.PTH_1265"/>
<dbReference type="KEGG" id="pth:PTH_1265"/>
<dbReference type="eggNOG" id="COG0779">
    <property type="taxonomic scope" value="Bacteria"/>
</dbReference>
<dbReference type="HOGENOM" id="CLU_070525_2_2_9"/>
<dbReference type="Proteomes" id="UP000006556">
    <property type="component" value="Chromosome"/>
</dbReference>
<dbReference type="GO" id="GO:0005829">
    <property type="term" value="C:cytosol"/>
    <property type="evidence" value="ECO:0007669"/>
    <property type="project" value="TreeGrafter"/>
</dbReference>
<dbReference type="GO" id="GO:0000028">
    <property type="term" value="P:ribosomal small subunit assembly"/>
    <property type="evidence" value="ECO:0007669"/>
    <property type="project" value="TreeGrafter"/>
</dbReference>
<dbReference type="GO" id="GO:0006412">
    <property type="term" value="P:translation"/>
    <property type="evidence" value="ECO:0007669"/>
    <property type="project" value="TreeGrafter"/>
</dbReference>
<dbReference type="CDD" id="cd01734">
    <property type="entry name" value="YlxS_C"/>
    <property type="match status" value="1"/>
</dbReference>
<dbReference type="FunFam" id="3.30.300.70:FF:000001">
    <property type="entry name" value="Ribosome maturation factor RimP"/>
    <property type="match status" value="1"/>
</dbReference>
<dbReference type="Gene3D" id="2.30.30.180">
    <property type="entry name" value="Ribosome maturation factor RimP, C-terminal domain"/>
    <property type="match status" value="1"/>
</dbReference>
<dbReference type="Gene3D" id="3.30.300.70">
    <property type="entry name" value="RimP-like superfamily, N-terminal"/>
    <property type="match status" value="1"/>
</dbReference>
<dbReference type="HAMAP" id="MF_01077">
    <property type="entry name" value="RimP"/>
    <property type="match status" value="1"/>
</dbReference>
<dbReference type="InterPro" id="IPR003728">
    <property type="entry name" value="Ribosome_maturation_RimP"/>
</dbReference>
<dbReference type="InterPro" id="IPR028998">
    <property type="entry name" value="RimP_C"/>
</dbReference>
<dbReference type="InterPro" id="IPR036847">
    <property type="entry name" value="RimP_C_sf"/>
</dbReference>
<dbReference type="InterPro" id="IPR028989">
    <property type="entry name" value="RimP_N"/>
</dbReference>
<dbReference type="InterPro" id="IPR035956">
    <property type="entry name" value="RimP_N_sf"/>
</dbReference>
<dbReference type="NCBIfam" id="NF000928">
    <property type="entry name" value="PRK00092.1-2"/>
    <property type="match status" value="1"/>
</dbReference>
<dbReference type="PANTHER" id="PTHR33867">
    <property type="entry name" value="RIBOSOME MATURATION FACTOR RIMP"/>
    <property type="match status" value="1"/>
</dbReference>
<dbReference type="PANTHER" id="PTHR33867:SF1">
    <property type="entry name" value="RIBOSOME MATURATION FACTOR RIMP"/>
    <property type="match status" value="1"/>
</dbReference>
<dbReference type="Pfam" id="PF17384">
    <property type="entry name" value="DUF150_C"/>
    <property type="match status" value="1"/>
</dbReference>
<dbReference type="Pfam" id="PF02576">
    <property type="entry name" value="RimP_N"/>
    <property type="match status" value="1"/>
</dbReference>
<dbReference type="SUPFAM" id="SSF74942">
    <property type="entry name" value="YhbC-like, C-terminal domain"/>
    <property type="match status" value="1"/>
</dbReference>
<dbReference type="SUPFAM" id="SSF75420">
    <property type="entry name" value="YhbC-like, N-terminal domain"/>
    <property type="match status" value="1"/>
</dbReference>
<sequence>MAREKVLELVKRVTLPVVQEAGLELVDVEYAKEGGRYYLRIFIDKPGGVRIEDCQHVSEKIDRLLDELDPIPQSYFLEVSSPGIDRPLKKAGDYIRFAGRLARVKTFSPVEGRRKFTGRIVGMHGEDVVMQVEGKEMSIPFKQIASARLEVEF</sequence>
<keyword id="KW-0963">Cytoplasm</keyword>
<keyword id="KW-1185">Reference proteome</keyword>
<keyword id="KW-0690">Ribosome biogenesis</keyword>
<organism>
    <name type="scientific">Pelotomaculum thermopropionicum (strain DSM 13744 / JCM 10971 / SI)</name>
    <dbReference type="NCBI Taxonomy" id="370438"/>
    <lineage>
        <taxon>Bacteria</taxon>
        <taxon>Bacillati</taxon>
        <taxon>Bacillota</taxon>
        <taxon>Clostridia</taxon>
        <taxon>Eubacteriales</taxon>
        <taxon>Desulfotomaculaceae</taxon>
        <taxon>Pelotomaculum</taxon>
    </lineage>
</organism>
<proteinExistence type="inferred from homology"/>
<protein>
    <recommendedName>
        <fullName evidence="1">Ribosome maturation factor RimP</fullName>
    </recommendedName>
</protein>
<accession>A5D2U8</accession>
<evidence type="ECO:0000255" key="1">
    <source>
        <dbReference type="HAMAP-Rule" id="MF_01077"/>
    </source>
</evidence>